<organism>
    <name type="scientific">Bifidobacterium longum subsp. infantis (strain ATCC 15697 / DSM 20088 / JCM 1222 / NCTC 11817 / S12)</name>
    <dbReference type="NCBI Taxonomy" id="391904"/>
    <lineage>
        <taxon>Bacteria</taxon>
        <taxon>Bacillati</taxon>
        <taxon>Actinomycetota</taxon>
        <taxon>Actinomycetes</taxon>
        <taxon>Bifidobacteriales</taxon>
        <taxon>Bifidobacteriaceae</taxon>
        <taxon>Bifidobacterium</taxon>
    </lineage>
</organism>
<keyword id="KW-0963">Cytoplasm</keyword>
<keyword id="KW-0342">GTP-binding</keyword>
<keyword id="KW-0378">Hydrolase</keyword>
<keyword id="KW-0460">Magnesium</keyword>
<keyword id="KW-0479">Metal-binding</keyword>
<keyword id="KW-0547">Nucleotide-binding</keyword>
<feature type="chain" id="PRO_0000385746" description="GTPase Obg">
    <location>
        <begin position="1"/>
        <end position="563"/>
    </location>
</feature>
<feature type="domain" description="Obg" evidence="3">
    <location>
        <begin position="2"/>
        <end position="168"/>
    </location>
</feature>
<feature type="domain" description="OBG-type G" evidence="1">
    <location>
        <begin position="169"/>
        <end position="349"/>
    </location>
</feature>
<feature type="domain" description="OCT" evidence="2">
    <location>
        <begin position="383"/>
        <end position="469"/>
    </location>
</feature>
<feature type="region of interest" description="Disordered" evidence="4">
    <location>
        <begin position="478"/>
        <end position="509"/>
    </location>
</feature>
<feature type="region of interest" description="Disordered" evidence="4">
    <location>
        <begin position="528"/>
        <end position="563"/>
    </location>
</feature>
<feature type="compositionally biased region" description="Basic and acidic residues" evidence="4">
    <location>
        <begin position="486"/>
        <end position="509"/>
    </location>
</feature>
<feature type="binding site" evidence="1">
    <location>
        <begin position="175"/>
        <end position="182"/>
    </location>
    <ligand>
        <name>GTP</name>
        <dbReference type="ChEBI" id="CHEBI:37565"/>
    </ligand>
</feature>
<feature type="binding site" evidence="1">
    <location>
        <position position="182"/>
    </location>
    <ligand>
        <name>Mg(2+)</name>
        <dbReference type="ChEBI" id="CHEBI:18420"/>
    </ligand>
</feature>
<feature type="binding site" evidence="1">
    <location>
        <begin position="200"/>
        <end position="204"/>
    </location>
    <ligand>
        <name>GTP</name>
        <dbReference type="ChEBI" id="CHEBI:37565"/>
    </ligand>
</feature>
<feature type="binding site" evidence="1">
    <location>
        <position position="202"/>
    </location>
    <ligand>
        <name>Mg(2+)</name>
        <dbReference type="ChEBI" id="CHEBI:18420"/>
    </ligand>
</feature>
<feature type="binding site" evidence="1">
    <location>
        <begin position="221"/>
        <end position="224"/>
    </location>
    <ligand>
        <name>GTP</name>
        <dbReference type="ChEBI" id="CHEBI:37565"/>
    </ligand>
</feature>
<feature type="binding site" evidence="1">
    <location>
        <begin position="301"/>
        <end position="304"/>
    </location>
    <ligand>
        <name>GTP</name>
        <dbReference type="ChEBI" id="CHEBI:37565"/>
    </ligand>
</feature>
<feature type="binding site" evidence="1">
    <location>
        <begin position="330"/>
        <end position="332"/>
    </location>
    <ligand>
        <name>GTP</name>
        <dbReference type="ChEBI" id="CHEBI:37565"/>
    </ligand>
</feature>
<sequence>MSDFVDRVTVHVKGGDGGNGSAGIRREKYKPLAGPNGGNGGDGGSVVFVADRNATSLLDYRFMPHRVAGSGTMGLGDNKDGSKGEDLILPVPCGTVVFEARGEQGKAKHPGAQLADLRHEGDRCVVAQGGAGGLGNIALANKTRRAPGFALLGELGEERDVILELKSIADVALVGFPSAGKSSLIAAMSSAKPKIADYPFTTLVPNLGVVIAGDSRYTIADVPGLIPGASEGKGLGLEFLRHIERTEIIAHVIDCATLEPDRDPMSDYHALENELALYADKLELPLGAIPIPERPRIVILNKIDVPEAKELAEFVRPEFERLGLKVFEISTASHEGLKELNFALSALVHEMREEVANREQAEEEARVVIKPLETKGRRPRRADEGGSALEFTVERRELGNGEVFFEVRGVKPERWVMQTNFDNDEAVGYLADRLAKLGVEDELRRKGAHPGDEVRIGRGARMVEFDWDPTISAGAEMLDGSNLGARGKDLRLEEQDPRTHRRSNAERRAQYHEMMDARAAVRDAMMAERKAGHWADPTVDDDRHDENSLFGHGESSEDGETEE</sequence>
<accession>B7GNK1</accession>
<accession>E8MNT4</accession>
<proteinExistence type="inferred from homology"/>
<reference key="1">
    <citation type="journal article" date="2008" name="Proc. Natl. Acad. Sci. U.S.A.">
        <title>The genome sequence of Bifidobacterium longum subsp. infantis reveals adaptations for milk utilization within the infant microbiome.</title>
        <authorList>
            <person name="Sela D.A."/>
            <person name="Chapman J."/>
            <person name="Adeuya A."/>
            <person name="Kim J.H."/>
            <person name="Chen F."/>
            <person name="Whitehead T.R."/>
            <person name="Lapidus A."/>
            <person name="Rokhsar D.S."/>
            <person name="Lebrilla C.B."/>
            <person name="German J.B."/>
            <person name="Price N.P."/>
            <person name="Richardson P.M."/>
            <person name="Mills D.A."/>
        </authorList>
    </citation>
    <scope>NUCLEOTIDE SEQUENCE [LARGE SCALE GENOMIC DNA]</scope>
    <source>
        <strain>ATCC 15697 / DSM 20088 / JCM 1222 / NCTC 11817 / S12</strain>
    </source>
</reference>
<reference key="2">
    <citation type="journal article" date="2011" name="Nature">
        <title>Bifidobacteria can protect from enteropathogenic infection through production of acetate.</title>
        <authorList>
            <person name="Fukuda S."/>
            <person name="Toh H."/>
            <person name="Hase K."/>
            <person name="Oshima K."/>
            <person name="Nakanishi Y."/>
            <person name="Yoshimura K."/>
            <person name="Tobe T."/>
            <person name="Clarke J.M."/>
            <person name="Topping D.L."/>
            <person name="Suzuki T."/>
            <person name="Taylor T.D."/>
            <person name="Itoh K."/>
            <person name="Kikuchi J."/>
            <person name="Morita H."/>
            <person name="Hattori M."/>
            <person name="Ohno H."/>
        </authorList>
    </citation>
    <scope>NUCLEOTIDE SEQUENCE [LARGE SCALE GENOMIC DNA]</scope>
    <source>
        <strain>ATCC 15697 / DSM 20088 / JCM 1222 / NCTC 11817 / S12</strain>
    </source>
</reference>
<protein>
    <recommendedName>
        <fullName evidence="1">GTPase Obg</fullName>
        <ecNumber evidence="1">3.6.5.-</ecNumber>
    </recommendedName>
    <alternativeName>
        <fullName evidence="1">GTP-binding protein Obg</fullName>
    </alternativeName>
</protein>
<comment type="function">
    <text evidence="1">An essential GTPase which binds GTP, GDP and possibly (p)ppGpp with moderate affinity, with high nucleotide exchange rates and a fairly low GTP hydrolysis rate. Plays a role in control of the cell cycle, stress response, ribosome biogenesis and in those bacteria that undergo differentiation, in morphogenesis control.</text>
</comment>
<comment type="cofactor">
    <cofactor evidence="1">
        <name>Mg(2+)</name>
        <dbReference type="ChEBI" id="CHEBI:18420"/>
    </cofactor>
</comment>
<comment type="subunit">
    <text evidence="1">Monomer.</text>
</comment>
<comment type="subcellular location">
    <subcellularLocation>
        <location evidence="1">Cytoplasm</location>
    </subcellularLocation>
</comment>
<comment type="similarity">
    <text evidence="1">Belongs to the TRAFAC class OBG-HflX-like GTPase superfamily. OBG GTPase family.</text>
</comment>
<evidence type="ECO:0000255" key="1">
    <source>
        <dbReference type="HAMAP-Rule" id="MF_01454"/>
    </source>
</evidence>
<evidence type="ECO:0000255" key="2">
    <source>
        <dbReference type="PROSITE-ProRule" id="PRU01229"/>
    </source>
</evidence>
<evidence type="ECO:0000255" key="3">
    <source>
        <dbReference type="PROSITE-ProRule" id="PRU01231"/>
    </source>
</evidence>
<evidence type="ECO:0000256" key="4">
    <source>
        <dbReference type="SAM" id="MobiDB-lite"/>
    </source>
</evidence>
<gene>
    <name evidence="1" type="primary">obg</name>
    <name type="ordered locus">Blon_2299</name>
    <name type="ordered locus">BLIJ_2373</name>
</gene>
<dbReference type="EC" id="3.6.5.-" evidence="1"/>
<dbReference type="EMBL" id="CP001095">
    <property type="protein sequence ID" value="ACJ53357.1"/>
    <property type="molecule type" value="Genomic_DNA"/>
</dbReference>
<dbReference type="EMBL" id="AP010889">
    <property type="protein sequence ID" value="BAJ69950.1"/>
    <property type="molecule type" value="Genomic_DNA"/>
</dbReference>
<dbReference type="RefSeq" id="WP_012578528.1">
    <property type="nucleotide sequence ID" value="NC_011593.1"/>
</dbReference>
<dbReference type="SMR" id="B7GNK1"/>
<dbReference type="KEGG" id="bln:Blon_2299"/>
<dbReference type="KEGG" id="blon:BLIJ_2373"/>
<dbReference type="PATRIC" id="fig|391904.8.peg.2374"/>
<dbReference type="HOGENOM" id="CLU_011747_1_0_11"/>
<dbReference type="Proteomes" id="UP000001360">
    <property type="component" value="Chromosome"/>
</dbReference>
<dbReference type="GO" id="GO:0005737">
    <property type="term" value="C:cytoplasm"/>
    <property type="evidence" value="ECO:0007669"/>
    <property type="project" value="UniProtKB-SubCell"/>
</dbReference>
<dbReference type="GO" id="GO:0005525">
    <property type="term" value="F:GTP binding"/>
    <property type="evidence" value="ECO:0007669"/>
    <property type="project" value="UniProtKB-UniRule"/>
</dbReference>
<dbReference type="GO" id="GO:0003924">
    <property type="term" value="F:GTPase activity"/>
    <property type="evidence" value="ECO:0007669"/>
    <property type="project" value="UniProtKB-UniRule"/>
</dbReference>
<dbReference type="GO" id="GO:0000287">
    <property type="term" value="F:magnesium ion binding"/>
    <property type="evidence" value="ECO:0007669"/>
    <property type="project" value="InterPro"/>
</dbReference>
<dbReference type="GO" id="GO:0042254">
    <property type="term" value="P:ribosome biogenesis"/>
    <property type="evidence" value="ECO:0007669"/>
    <property type="project" value="UniProtKB-UniRule"/>
</dbReference>
<dbReference type="CDD" id="cd01898">
    <property type="entry name" value="Obg"/>
    <property type="match status" value="1"/>
</dbReference>
<dbReference type="FunFam" id="2.70.210.12:FF:000001">
    <property type="entry name" value="GTPase Obg"/>
    <property type="match status" value="1"/>
</dbReference>
<dbReference type="Gene3D" id="3.30.300.350">
    <property type="entry name" value="GTP-binding protein OBG, C-terminal domain"/>
    <property type="match status" value="1"/>
</dbReference>
<dbReference type="Gene3D" id="2.70.210.12">
    <property type="entry name" value="GTP1/OBG domain"/>
    <property type="match status" value="1"/>
</dbReference>
<dbReference type="Gene3D" id="3.40.50.300">
    <property type="entry name" value="P-loop containing nucleotide triphosphate hydrolases"/>
    <property type="match status" value="1"/>
</dbReference>
<dbReference type="HAMAP" id="MF_01454">
    <property type="entry name" value="GTPase_Obg"/>
    <property type="match status" value="1"/>
</dbReference>
<dbReference type="InterPro" id="IPR031167">
    <property type="entry name" value="G_OBG"/>
</dbReference>
<dbReference type="InterPro" id="IPR006073">
    <property type="entry name" value="GTP-bd"/>
</dbReference>
<dbReference type="InterPro" id="IPR014100">
    <property type="entry name" value="GTP-bd_Obg/CgtA"/>
</dbReference>
<dbReference type="InterPro" id="IPR036346">
    <property type="entry name" value="GTP-bd_prot_GTP1/OBG_C_sf"/>
</dbReference>
<dbReference type="InterPro" id="IPR006074">
    <property type="entry name" value="GTP1-OBG_CS"/>
</dbReference>
<dbReference type="InterPro" id="IPR006169">
    <property type="entry name" value="GTP1_OBG_dom"/>
</dbReference>
<dbReference type="InterPro" id="IPR036726">
    <property type="entry name" value="GTP1_OBG_dom_sf"/>
</dbReference>
<dbReference type="InterPro" id="IPR045086">
    <property type="entry name" value="OBG_GTPase"/>
</dbReference>
<dbReference type="InterPro" id="IPR015349">
    <property type="entry name" value="OCT_dom"/>
</dbReference>
<dbReference type="InterPro" id="IPR027417">
    <property type="entry name" value="P-loop_NTPase"/>
</dbReference>
<dbReference type="NCBIfam" id="TIGR02729">
    <property type="entry name" value="Obg_CgtA"/>
    <property type="match status" value="1"/>
</dbReference>
<dbReference type="NCBIfam" id="TIGR03595">
    <property type="entry name" value="Obg_CgtA_exten"/>
    <property type="match status" value="1"/>
</dbReference>
<dbReference type="NCBIfam" id="NF008954">
    <property type="entry name" value="PRK12296.1"/>
    <property type="match status" value="1"/>
</dbReference>
<dbReference type="NCBIfam" id="NF008955">
    <property type="entry name" value="PRK12297.1"/>
    <property type="match status" value="1"/>
</dbReference>
<dbReference type="NCBIfam" id="NF008956">
    <property type="entry name" value="PRK12299.1"/>
    <property type="match status" value="1"/>
</dbReference>
<dbReference type="PANTHER" id="PTHR11702">
    <property type="entry name" value="DEVELOPMENTALLY REGULATED GTP-BINDING PROTEIN-RELATED"/>
    <property type="match status" value="1"/>
</dbReference>
<dbReference type="PANTHER" id="PTHR11702:SF31">
    <property type="entry name" value="MITOCHONDRIAL RIBOSOME-ASSOCIATED GTPASE 2"/>
    <property type="match status" value="1"/>
</dbReference>
<dbReference type="Pfam" id="PF09269">
    <property type="entry name" value="DUF1967"/>
    <property type="match status" value="1"/>
</dbReference>
<dbReference type="Pfam" id="PF01018">
    <property type="entry name" value="GTP1_OBG"/>
    <property type="match status" value="1"/>
</dbReference>
<dbReference type="Pfam" id="PF01926">
    <property type="entry name" value="MMR_HSR1"/>
    <property type="match status" value="1"/>
</dbReference>
<dbReference type="PRINTS" id="PR00326">
    <property type="entry name" value="GTP1OBG"/>
</dbReference>
<dbReference type="SUPFAM" id="SSF102741">
    <property type="entry name" value="Obg GTP-binding protein C-terminal domain"/>
    <property type="match status" value="1"/>
</dbReference>
<dbReference type="SUPFAM" id="SSF82051">
    <property type="entry name" value="Obg GTP-binding protein N-terminal domain"/>
    <property type="match status" value="1"/>
</dbReference>
<dbReference type="SUPFAM" id="SSF52540">
    <property type="entry name" value="P-loop containing nucleoside triphosphate hydrolases"/>
    <property type="match status" value="1"/>
</dbReference>
<dbReference type="PROSITE" id="PS51710">
    <property type="entry name" value="G_OBG"/>
    <property type="match status" value="1"/>
</dbReference>
<dbReference type="PROSITE" id="PS00905">
    <property type="entry name" value="GTP1_OBG"/>
    <property type="match status" value="1"/>
</dbReference>
<dbReference type="PROSITE" id="PS51883">
    <property type="entry name" value="OBG"/>
    <property type="match status" value="1"/>
</dbReference>
<dbReference type="PROSITE" id="PS51881">
    <property type="entry name" value="OCT"/>
    <property type="match status" value="1"/>
</dbReference>
<name>OBG_BIFLS</name>